<name>FER_MYCTU</name>
<protein>
    <recommendedName>
        <fullName>Ferredoxin</fullName>
    </recommendedName>
</protein>
<keyword id="KW-0003">3Fe-4S</keyword>
<keyword id="KW-0004">4Fe-4S</keyword>
<keyword id="KW-0249">Electron transport</keyword>
<keyword id="KW-0408">Iron</keyword>
<keyword id="KW-0411">Iron-sulfur</keyword>
<keyword id="KW-0479">Metal-binding</keyword>
<keyword id="KW-1185">Reference proteome</keyword>
<keyword id="KW-0677">Repeat</keyword>
<keyword id="KW-0813">Transport</keyword>
<comment type="function">
    <text evidence="1">Ferredoxins are iron-sulfur proteins that transfer electrons in a wide variety of metabolic reactions.</text>
</comment>
<comment type="cofactor">
    <cofactor evidence="1">
        <name>[4Fe-4S] cluster</name>
        <dbReference type="ChEBI" id="CHEBI:49883"/>
    </cofactor>
    <text evidence="1">Binds 1 [4Fe-4S] cluster.</text>
</comment>
<comment type="cofactor">
    <cofactor evidence="1">
        <name>[3Fe-4S] cluster</name>
        <dbReference type="ChEBI" id="CHEBI:21137"/>
    </cofactor>
    <text evidence="1">Binds 1 [3Fe-4S] cluster.</text>
</comment>
<comment type="induction">
    <text evidence="3 4 5 6 7">A member of the dormancy regulon. Induced in response to reduced oxygen tension (hypoxia), low levels of nitric oxide (NO) and carbon monoxide (CO). It is hoped that this regulon will give insight into the latent, or dormant phase of infection. Induced in C57BL/6 mouse lungs 3 weeks after low dose aerosol infection with H37Rv bacteria.</text>
</comment>
<reference key="1">
    <citation type="journal article" date="1998" name="Nature">
        <title>Deciphering the biology of Mycobacterium tuberculosis from the complete genome sequence.</title>
        <authorList>
            <person name="Cole S.T."/>
            <person name="Brosch R."/>
            <person name="Parkhill J."/>
            <person name="Garnier T."/>
            <person name="Churcher C.M."/>
            <person name="Harris D.E."/>
            <person name="Gordon S.V."/>
            <person name="Eiglmeier K."/>
            <person name="Gas S."/>
            <person name="Barry C.E. III"/>
            <person name="Tekaia F."/>
            <person name="Badcock K."/>
            <person name="Basham D."/>
            <person name="Brown D."/>
            <person name="Chillingworth T."/>
            <person name="Connor R."/>
            <person name="Davies R.M."/>
            <person name="Devlin K."/>
            <person name="Feltwell T."/>
            <person name="Gentles S."/>
            <person name="Hamlin N."/>
            <person name="Holroyd S."/>
            <person name="Hornsby T."/>
            <person name="Jagels K."/>
            <person name="Krogh A."/>
            <person name="McLean J."/>
            <person name="Moule S."/>
            <person name="Murphy L.D."/>
            <person name="Oliver S."/>
            <person name="Osborne J."/>
            <person name="Quail M.A."/>
            <person name="Rajandream M.A."/>
            <person name="Rogers J."/>
            <person name="Rutter S."/>
            <person name="Seeger K."/>
            <person name="Skelton S."/>
            <person name="Squares S."/>
            <person name="Squares R."/>
            <person name="Sulston J.E."/>
            <person name="Taylor K."/>
            <person name="Whitehead S."/>
            <person name="Barrell B.G."/>
        </authorList>
    </citation>
    <scope>NUCLEOTIDE SEQUENCE [LARGE SCALE GENOMIC DNA]</scope>
    <source>
        <strain>ATCC 25618 / H37Rv</strain>
    </source>
</reference>
<reference key="2">
    <citation type="journal article" date="2001" name="Proc. Natl. Acad. Sci. U.S.A.">
        <title>Regulation of the Mycobacterium tuberculosis hypoxic response gene encoding alpha -crystallin.</title>
        <authorList>
            <person name="Sherman D.R."/>
            <person name="Voskuil M."/>
            <person name="Schnappinger D."/>
            <person name="Liao R."/>
            <person name="Harrell M.I."/>
            <person name="Schoolnik G.K."/>
        </authorList>
    </citation>
    <scope>INDUCTION BY HYPOXIA</scope>
    <scope>IN MOUSE MODEL</scope>
    <source>
        <strain>ATCC 25618 / H37Rv</strain>
    </source>
</reference>
<reference key="3">
    <citation type="journal article" date="2003" name="J. Exp. Med.">
        <title>Inhibition of respiration by nitric oxide induces a Mycobacterium tuberculosis dormancy program.</title>
        <authorList>
            <person name="Voskuil M.I."/>
            <person name="Schnappinger D."/>
            <person name="Visconti K.C."/>
            <person name="Harrell M.I."/>
            <person name="Dolganov G.M."/>
            <person name="Sherman D.R."/>
            <person name="Schoolnik G.K."/>
        </authorList>
    </citation>
    <scope>INDUCTION BY NITRIC OXIDE (NO); BY HYPOXIA; IN MOUSE MODEL AND DORMANCY REGULON</scope>
    <source>
        <strain>ATCC 25618 / H37Rv</strain>
    </source>
</reference>
<reference key="4">
    <citation type="journal article" date="2007" name="Proc. Natl. Acad. Sci. U.S.A.">
        <title>Mycobacterium tuberculosis DosS is a redox sensor and DosT is a hypoxia sensor.</title>
        <authorList>
            <person name="Kumar A."/>
            <person name="Toledo J.C."/>
            <person name="Patel R.P."/>
            <person name="Lancaster J.R. Jr."/>
            <person name="Steyn A.J."/>
        </authorList>
    </citation>
    <scope>INDUCTION BY CARBON MONOXIDE (CO)</scope>
    <source>
        <strain>ATCC 25618 / H37Rv</strain>
    </source>
</reference>
<reference key="5">
    <citation type="journal article" date="2008" name="Cell Host Microbe">
        <title>Mycobacterium tuberculosis senses host-derived carbon monoxide during macrophage infection.</title>
        <authorList>
            <person name="Shiloh M.U."/>
            <person name="Manzanillo P."/>
            <person name="Cox J.S."/>
        </authorList>
    </citation>
    <scope>INDUCTION BY CARBON MONOXIDE (CO)</scope>
    <source>
        <strain>ATCC 35801 / TMC 107 / Erdman</strain>
    </source>
</reference>
<reference key="6">
    <citation type="journal article" date="2008" name="J. Biol. Chem.">
        <title>Heme oxygenase-1-derived carbon monoxide induces the Mycobacterium tuberculosis dormancy regulon.</title>
        <authorList>
            <person name="Kumar A."/>
            <person name="Deshane J.S."/>
            <person name="Crossman D.K."/>
            <person name="Bolisetty S."/>
            <person name="Yan B.S."/>
            <person name="Kramnik I."/>
            <person name="Agarwal A."/>
            <person name="Steyn A.J."/>
        </authorList>
    </citation>
    <scope>INDUCTION BY CARBON MONOXIDE (CO)</scope>
    <scope>DORMANCY REGULON</scope>
    <source>
        <strain>ATCC 25618 / H37Rv</strain>
    </source>
</reference>
<reference key="7">
    <citation type="journal article" date="2011" name="Mol. Cell. Proteomics">
        <title>Proteogenomic analysis of Mycobacterium tuberculosis by high resolution mass spectrometry.</title>
        <authorList>
            <person name="Kelkar D.S."/>
            <person name="Kumar D."/>
            <person name="Kumar P."/>
            <person name="Balakrishnan L."/>
            <person name="Muthusamy B."/>
            <person name="Yadav A.K."/>
            <person name="Shrivastava P."/>
            <person name="Marimuthu A."/>
            <person name="Anand S."/>
            <person name="Sundaram H."/>
            <person name="Kingsbury R."/>
            <person name="Harsha H.C."/>
            <person name="Nair B."/>
            <person name="Prasad T.S."/>
            <person name="Chauhan D.S."/>
            <person name="Katoch K."/>
            <person name="Katoch V.M."/>
            <person name="Kumar P."/>
            <person name="Chaerkady R."/>
            <person name="Ramachandran S."/>
            <person name="Dash D."/>
            <person name="Pandey A."/>
        </authorList>
    </citation>
    <scope>IDENTIFICATION BY MASS SPECTROMETRY [LARGE SCALE ANALYSIS]</scope>
    <source>
        <strain>ATCC 25618 / H37Rv</strain>
    </source>
</reference>
<feature type="chain" id="PRO_0000159099" description="Ferredoxin">
    <location>
        <begin position="1"/>
        <end position="114"/>
    </location>
</feature>
<feature type="domain" description="4Fe-4S ferredoxin-type" evidence="2">
    <location>
        <begin position="31"/>
        <end position="60"/>
    </location>
</feature>
<feature type="binding site" evidence="1">
    <location>
        <position position="9"/>
    </location>
    <ligand>
        <name>[3Fe-4S] cluster</name>
        <dbReference type="ChEBI" id="CHEBI:21137"/>
    </ligand>
</feature>
<feature type="binding site" evidence="1">
    <location>
        <position position="17"/>
    </location>
    <ligand>
        <name>[3Fe-4S] cluster</name>
        <dbReference type="ChEBI" id="CHEBI:21137"/>
    </ligand>
</feature>
<feature type="binding site" evidence="1">
    <location>
        <position position="21"/>
    </location>
    <ligand>
        <name>[4Fe-4S] cluster</name>
        <dbReference type="ChEBI" id="CHEBI:49883"/>
    </ligand>
</feature>
<feature type="binding site" evidence="1">
    <location>
        <position position="40"/>
    </location>
    <ligand>
        <name>[4Fe-4S] cluster</name>
        <dbReference type="ChEBI" id="CHEBI:49883"/>
    </ligand>
</feature>
<feature type="binding site" evidence="1">
    <location>
        <position position="43"/>
    </location>
    <ligand>
        <name>[4Fe-4S] cluster</name>
        <dbReference type="ChEBI" id="CHEBI:49883"/>
    </ligand>
</feature>
<feature type="binding site" evidence="1">
    <location>
        <position position="46"/>
    </location>
    <ligand>
        <name>[4Fe-4S] cluster</name>
        <dbReference type="ChEBI" id="CHEBI:49883"/>
    </ligand>
</feature>
<feature type="binding site" evidence="1">
    <location>
        <position position="50"/>
    </location>
    <ligand>
        <name>[3Fe-4S] cluster</name>
        <dbReference type="ChEBI" id="CHEBI:21137"/>
    </ligand>
</feature>
<organism>
    <name type="scientific">Mycobacterium tuberculosis (strain ATCC 25618 / H37Rv)</name>
    <dbReference type="NCBI Taxonomy" id="83332"/>
    <lineage>
        <taxon>Bacteria</taxon>
        <taxon>Bacillati</taxon>
        <taxon>Actinomycetota</taxon>
        <taxon>Actinomycetes</taxon>
        <taxon>Mycobacteriales</taxon>
        <taxon>Mycobacteriaceae</taxon>
        <taxon>Mycobacterium</taxon>
        <taxon>Mycobacterium tuberculosis complex</taxon>
    </lineage>
</organism>
<evidence type="ECO:0000250" key="1"/>
<evidence type="ECO:0000255" key="2">
    <source>
        <dbReference type="PROSITE-ProRule" id="PRU00711"/>
    </source>
</evidence>
<evidence type="ECO:0000269" key="3">
    <source>
    </source>
</evidence>
<evidence type="ECO:0000269" key="4">
    <source>
    </source>
</evidence>
<evidence type="ECO:0000269" key="5">
    <source>
    </source>
</evidence>
<evidence type="ECO:0000269" key="6">
    <source>
    </source>
</evidence>
<evidence type="ECO:0000269" key="7">
    <source>
    </source>
</evidence>
<accession>P9WNE7</accession>
<accession>L0TB85</accession>
<accession>P64122</accession>
<accession>Q10839</accession>
<gene>
    <name type="primary">fdxA</name>
    <name type="ordered locus">Rv2007c</name>
    <name type="ORF">MTCY39.10</name>
</gene>
<sequence>MTYVIGSECVDVMDKSCVQECPVDCIYEGARMLYINPDECVDCGACKPACRVEAIYWEGDLPDDQHQHLGDNAAFFHQVLPGRVAPLGSPGGAAAVGPIGVDTPLVAAIPVECP</sequence>
<proteinExistence type="evidence at protein level"/>
<dbReference type="EMBL" id="AL123456">
    <property type="protein sequence ID" value="CCP44779.1"/>
    <property type="molecule type" value="Genomic_DNA"/>
</dbReference>
<dbReference type="PIR" id="E70759">
    <property type="entry name" value="E70759"/>
</dbReference>
<dbReference type="RefSeq" id="NP_216523.1">
    <property type="nucleotide sequence ID" value="NC_000962.3"/>
</dbReference>
<dbReference type="RefSeq" id="WP_003410065.1">
    <property type="nucleotide sequence ID" value="NZ_NVQJ01000043.1"/>
</dbReference>
<dbReference type="SMR" id="P9WNE7"/>
<dbReference type="FunCoup" id="P9WNE7">
    <property type="interactions" value="1"/>
</dbReference>
<dbReference type="STRING" id="83332.Rv2007c"/>
<dbReference type="PaxDb" id="83332-Rv2007c"/>
<dbReference type="DNASU" id="888887"/>
<dbReference type="GeneID" id="45425987"/>
<dbReference type="GeneID" id="888887"/>
<dbReference type="KEGG" id="mtu:Rv2007c"/>
<dbReference type="KEGG" id="mtv:RVBD_2007c"/>
<dbReference type="TubercuList" id="Rv2007c"/>
<dbReference type="eggNOG" id="COG1146">
    <property type="taxonomic scope" value="Bacteria"/>
</dbReference>
<dbReference type="InParanoid" id="P9WNE7"/>
<dbReference type="OrthoDB" id="9803397at2"/>
<dbReference type="PhylomeDB" id="P9WNE7"/>
<dbReference type="Reactome" id="R-MTU-936721">
    <property type="pathway name" value="Cysteine synthesis from O-acetylserine"/>
</dbReference>
<dbReference type="Proteomes" id="UP000001584">
    <property type="component" value="Chromosome"/>
</dbReference>
<dbReference type="GO" id="GO:0005829">
    <property type="term" value="C:cytosol"/>
    <property type="evidence" value="ECO:0000304"/>
    <property type="project" value="Reactome"/>
</dbReference>
<dbReference type="GO" id="GO:0051538">
    <property type="term" value="F:3 iron, 4 sulfur cluster binding"/>
    <property type="evidence" value="ECO:0007669"/>
    <property type="project" value="UniProtKB-KW"/>
</dbReference>
<dbReference type="GO" id="GO:0051539">
    <property type="term" value="F:4 iron, 4 sulfur cluster binding"/>
    <property type="evidence" value="ECO:0007669"/>
    <property type="project" value="UniProtKB-KW"/>
</dbReference>
<dbReference type="GO" id="GO:0009055">
    <property type="term" value="F:electron transfer activity"/>
    <property type="evidence" value="ECO:0007669"/>
    <property type="project" value="InterPro"/>
</dbReference>
<dbReference type="GO" id="GO:0046872">
    <property type="term" value="F:metal ion binding"/>
    <property type="evidence" value="ECO:0007669"/>
    <property type="project" value="UniProtKB-KW"/>
</dbReference>
<dbReference type="GO" id="GO:0075136">
    <property type="term" value="P:response to host"/>
    <property type="evidence" value="ECO:0000270"/>
    <property type="project" value="MTBBASE"/>
</dbReference>
<dbReference type="GO" id="GO:0001666">
    <property type="term" value="P:response to hypoxia"/>
    <property type="evidence" value="ECO:0000270"/>
    <property type="project" value="MTBBASE"/>
</dbReference>
<dbReference type="FunFam" id="3.30.70.20:FF:000048">
    <property type="entry name" value="Ferredoxin"/>
    <property type="match status" value="1"/>
</dbReference>
<dbReference type="Gene3D" id="3.30.70.20">
    <property type="match status" value="1"/>
</dbReference>
<dbReference type="InterPro" id="IPR017896">
    <property type="entry name" value="4Fe4S_Fe-S-bd"/>
</dbReference>
<dbReference type="InterPro" id="IPR000813">
    <property type="entry name" value="7Fe_ferredoxin"/>
</dbReference>
<dbReference type="InterPro" id="IPR054830">
    <property type="entry name" value="FdxA_Actino"/>
</dbReference>
<dbReference type="InterPro" id="IPR050294">
    <property type="entry name" value="RnfB_subfamily"/>
</dbReference>
<dbReference type="NCBIfam" id="NF045480">
    <property type="entry name" value="FdxA_Actino"/>
    <property type="match status" value="1"/>
</dbReference>
<dbReference type="PANTHER" id="PTHR42859:SF2">
    <property type="entry name" value="FERREDOXIN"/>
    <property type="match status" value="1"/>
</dbReference>
<dbReference type="PANTHER" id="PTHR42859">
    <property type="entry name" value="OXIDOREDUCTASE"/>
    <property type="match status" value="1"/>
</dbReference>
<dbReference type="Pfam" id="PF00037">
    <property type="entry name" value="Fer4"/>
    <property type="match status" value="1"/>
</dbReference>
<dbReference type="PRINTS" id="PR00354">
    <property type="entry name" value="7FE8SFRDOXIN"/>
</dbReference>
<dbReference type="SUPFAM" id="SSF54862">
    <property type="entry name" value="4Fe-4S ferredoxins"/>
    <property type="match status" value="1"/>
</dbReference>
<dbReference type="PROSITE" id="PS51379">
    <property type="entry name" value="4FE4S_FER_2"/>
    <property type="match status" value="1"/>
</dbReference>